<proteinExistence type="inferred from homology"/>
<feature type="chain" id="PRO_0000114016" description="Glutamyl-tRNA reductase">
    <location>
        <begin position="1"/>
        <end position="466"/>
    </location>
</feature>
<feature type="active site" description="Nucleophile" evidence="1">
    <location>
        <position position="48"/>
    </location>
</feature>
<feature type="binding site" evidence="1">
    <location>
        <begin position="47"/>
        <end position="50"/>
    </location>
    <ligand>
        <name>substrate</name>
    </ligand>
</feature>
<feature type="binding site" evidence="1">
    <location>
        <position position="107"/>
    </location>
    <ligand>
        <name>substrate</name>
    </ligand>
</feature>
<feature type="binding site" evidence="1">
    <location>
        <begin position="112"/>
        <end position="114"/>
    </location>
    <ligand>
        <name>substrate</name>
    </ligand>
</feature>
<feature type="binding site" evidence="1">
    <location>
        <position position="118"/>
    </location>
    <ligand>
        <name>substrate</name>
    </ligand>
</feature>
<feature type="binding site" evidence="1">
    <location>
        <begin position="194"/>
        <end position="199"/>
    </location>
    <ligand>
        <name>NADP(+)</name>
        <dbReference type="ChEBI" id="CHEBI:58349"/>
    </ligand>
</feature>
<feature type="site" description="Important for activity" evidence="1">
    <location>
        <position position="97"/>
    </location>
</feature>
<protein>
    <recommendedName>
        <fullName evidence="1">Glutamyl-tRNA reductase</fullName>
        <shortName evidence="1">GluTR</shortName>
        <ecNumber evidence="1">1.2.1.70</ecNumber>
    </recommendedName>
</protein>
<gene>
    <name evidence="1" type="primary">hemA</name>
    <name type="ordered locus">CE0435</name>
</gene>
<evidence type="ECO:0000255" key="1">
    <source>
        <dbReference type="HAMAP-Rule" id="MF_00087"/>
    </source>
</evidence>
<keyword id="KW-0521">NADP</keyword>
<keyword id="KW-0560">Oxidoreductase</keyword>
<keyword id="KW-0627">Porphyrin biosynthesis</keyword>
<keyword id="KW-1185">Reference proteome</keyword>
<accession>Q8FSF8</accession>
<reference key="1">
    <citation type="journal article" date="2003" name="Genome Res.">
        <title>Comparative complete genome sequence analysis of the amino acid replacements responsible for the thermostability of Corynebacterium efficiens.</title>
        <authorList>
            <person name="Nishio Y."/>
            <person name="Nakamura Y."/>
            <person name="Kawarabayasi Y."/>
            <person name="Usuda Y."/>
            <person name="Kimura E."/>
            <person name="Sugimoto S."/>
            <person name="Matsui K."/>
            <person name="Yamagishi A."/>
            <person name="Kikuchi H."/>
            <person name="Ikeo K."/>
            <person name="Gojobori T."/>
        </authorList>
    </citation>
    <scope>NUCLEOTIDE SEQUENCE [LARGE SCALE GENOMIC DNA]</scope>
    <source>
        <strain>DSM 44549 / YS-314 / AJ 12310 / JCM 11189 / NBRC 100395</strain>
    </source>
</reference>
<organism>
    <name type="scientific">Corynebacterium efficiens (strain DSM 44549 / YS-314 / AJ 12310 / JCM 11189 / NBRC 100395)</name>
    <dbReference type="NCBI Taxonomy" id="196164"/>
    <lineage>
        <taxon>Bacteria</taxon>
        <taxon>Bacillati</taxon>
        <taxon>Actinomycetota</taxon>
        <taxon>Actinomycetes</taxon>
        <taxon>Mycobacteriales</taxon>
        <taxon>Corynebacteriaceae</taxon>
        <taxon>Corynebacterium</taxon>
    </lineage>
</organism>
<dbReference type="EC" id="1.2.1.70" evidence="1"/>
<dbReference type="EMBL" id="BA000035">
    <property type="protein sequence ID" value="BAC17245.1"/>
    <property type="molecule type" value="Genomic_DNA"/>
</dbReference>
<dbReference type="SMR" id="Q8FSF8"/>
<dbReference type="STRING" id="196164.gene:10740833"/>
<dbReference type="KEGG" id="cef:CE0435"/>
<dbReference type="eggNOG" id="COG0373">
    <property type="taxonomic scope" value="Bacteria"/>
</dbReference>
<dbReference type="HOGENOM" id="CLU_035113_4_0_11"/>
<dbReference type="UniPathway" id="UPA00251">
    <property type="reaction ID" value="UER00316"/>
</dbReference>
<dbReference type="Proteomes" id="UP000001409">
    <property type="component" value="Chromosome"/>
</dbReference>
<dbReference type="GO" id="GO:0008883">
    <property type="term" value="F:glutamyl-tRNA reductase activity"/>
    <property type="evidence" value="ECO:0007669"/>
    <property type="project" value="UniProtKB-UniRule"/>
</dbReference>
<dbReference type="GO" id="GO:0050661">
    <property type="term" value="F:NADP binding"/>
    <property type="evidence" value="ECO:0007669"/>
    <property type="project" value="InterPro"/>
</dbReference>
<dbReference type="GO" id="GO:0019353">
    <property type="term" value="P:protoporphyrinogen IX biosynthetic process from glutamate"/>
    <property type="evidence" value="ECO:0007669"/>
    <property type="project" value="TreeGrafter"/>
</dbReference>
<dbReference type="CDD" id="cd05213">
    <property type="entry name" value="NAD_bind_Glutamyl_tRNA_reduct"/>
    <property type="match status" value="1"/>
</dbReference>
<dbReference type="FunFam" id="3.30.460.30:FF:000001">
    <property type="entry name" value="Glutamyl-tRNA reductase"/>
    <property type="match status" value="1"/>
</dbReference>
<dbReference type="Gene3D" id="3.30.460.30">
    <property type="entry name" value="Glutamyl-tRNA reductase, N-terminal domain"/>
    <property type="match status" value="1"/>
</dbReference>
<dbReference type="Gene3D" id="3.40.50.720">
    <property type="entry name" value="NAD(P)-binding Rossmann-like Domain"/>
    <property type="match status" value="1"/>
</dbReference>
<dbReference type="HAMAP" id="MF_00087">
    <property type="entry name" value="Glu_tRNA_reductase"/>
    <property type="match status" value="1"/>
</dbReference>
<dbReference type="InterPro" id="IPR000343">
    <property type="entry name" value="4pyrrol_synth_GluRdtase"/>
</dbReference>
<dbReference type="InterPro" id="IPR015896">
    <property type="entry name" value="4pyrrol_synth_GluRdtase_dimer"/>
</dbReference>
<dbReference type="InterPro" id="IPR015895">
    <property type="entry name" value="4pyrrol_synth_GluRdtase_N"/>
</dbReference>
<dbReference type="InterPro" id="IPR018214">
    <property type="entry name" value="GluRdtase_CS"/>
</dbReference>
<dbReference type="InterPro" id="IPR036453">
    <property type="entry name" value="GluRdtase_dimer_dom_sf"/>
</dbReference>
<dbReference type="InterPro" id="IPR036343">
    <property type="entry name" value="GluRdtase_N_sf"/>
</dbReference>
<dbReference type="InterPro" id="IPR036291">
    <property type="entry name" value="NAD(P)-bd_dom_sf"/>
</dbReference>
<dbReference type="InterPro" id="IPR006151">
    <property type="entry name" value="Shikm_DH/Glu-tRNA_Rdtase"/>
</dbReference>
<dbReference type="NCBIfam" id="TIGR01035">
    <property type="entry name" value="hemA"/>
    <property type="match status" value="1"/>
</dbReference>
<dbReference type="NCBIfam" id="NF000744">
    <property type="entry name" value="PRK00045.1-3"/>
    <property type="match status" value="1"/>
</dbReference>
<dbReference type="PANTHER" id="PTHR43013">
    <property type="entry name" value="GLUTAMYL-TRNA REDUCTASE"/>
    <property type="match status" value="1"/>
</dbReference>
<dbReference type="PANTHER" id="PTHR43013:SF1">
    <property type="entry name" value="GLUTAMYL-TRNA REDUCTASE"/>
    <property type="match status" value="1"/>
</dbReference>
<dbReference type="Pfam" id="PF00745">
    <property type="entry name" value="GlutR_dimer"/>
    <property type="match status" value="1"/>
</dbReference>
<dbReference type="Pfam" id="PF05201">
    <property type="entry name" value="GlutR_N"/>
    <property type="match status" value="1"/>
</dbReference>
<dbReference type="Pfam" id="PF01488">
    <property type="entry name" value="Shikimate_DH"/>
    <property type="match status" value="1"/>
</dbReference>
<dbReference type="PIRSF" id="PIRSF000445">
    <property type="entry name" value="4pyrrol_synth_GluRdtase"/>
    <property type="match status" value="1"/>
</dbReference>
<dbReference type="SUPFAM" id="SSF69742">
    <property type="entry name" value="Glutamyl tRNA-reductase catalytic, N-terminal domain"/>
    <property type="match status" value="1"/>
</dbReference>
<dbReference type="SUPFAM" id="SSF69075">
    <property type="entry name" value="Glutamyl tRNA-reductase dimerization domain"/>
    <property type="match status" value="1"/>
</dbReference>
<dbReference type="SUPFAM" id="SSF51735">
    <property type="entry name" value="NAD(P)-binding Rossmann-fold domains"/>
    <property type="match status" value="1"/>
</dbReference>
<dbReference type="PROSITE" id="PS00747">
    <property type="entry name" value="GLUTR"/>
    <property type="match status" value="1"/>
</dbReference>
<name>HEM1_COREF</name>
<comment type="function">
    <text evidence="1">Catalyzes the NADPH-dependent reduction of glutamyl-tRNA(Glu) to glutamate 1-semialdehyde (GSA).</text>
</comment>
<comment type="catalytic activity">
    <reaction evidence="1">
        <text>(S)-4-amino-5-oxopentanoate + tRNA(Glu) + NADP(+) = L-glutamyl-tRNA(Glu) + NADPH + H(+)</text>
        <dbReference type="Rhea" id="RHEA:12344"/>
        <dbReference type="Rhea" id="RHEA-COMP:9663"/>
        <dbReference type="Rhea" id="RHEA-COMP:9680"/>
        <dbReference type="ChEBI" id="CHEBI:15378"/>
        <dbReference type="ChEBI" id="CHEBI:57501"/>
        <dbReference type="ChEBI" id="CHEBI:57783"/>
        <dbReference type="ChEBI" id="CHEBI:58349"/>
        <dbReference type="ChEBI" id="CHEBI:78442"/>
        <dbReference type="ChEBI" id="CHEBI:78520"/>
        <dbReference type="EC" id="1.2.1.70"/>
    </reaction>
</comment>
<comment type="pathway">
    <text evidence="1">Porphyrin-containing compound metabolism; protoporphyrin-IX biosynthesis; 5-aminolevulinate from L-glutamyl-tRNA(Glu): step 1/2.</text>
</comment>
<comment type="subunit">
    <text evidence="1">Homodimer.</text>
</comment>
<comment type="domain">
    <text evidence="1">Possesses an unusual extended V-shaped dimeric structure with each monomer consisting of three distinct domains arranged along a curved 'spinal' alpha-helix. The N-terminal catalytic domain specifically recognizes the glutamate moiety of the substrate. The second domain is the NADPH-binding domain, and the third C-terminal domain is responsible for dimerization.</text>
</comment>
<comment type="miscellaneous">
    <text evidence="1">During catalysis, the active site Cys acts as a nucleophile attacking the alpha-carbonyl group of tRNA-bound glutamate with the formation of a thioester intermediate between enzyme and glutamate, and the concomitant release of tRNA(Glu). The thioester intermediate is finally reduced by direct hydride transfer from NADPH, to form the product GSA.</text>
</comment>
<comment type="similarity">
    <text evidence="1">Belongs to the glutamyl-tRNA reductase family.</text>
</comment>
<sequence>MLVVGMSHRSAPVALLERLSMDDSVRGQTTSALVERPSLSEALIVSTCNRLEVYTVTSSFHTGVNDVVEVLHEISGVDIETLRGYLYVRYADAAAEHMLVVASGLDSMVVGEQQIIGQVRTAYQQATEAGTVGPALHALAQTALHTGKRVHTETDIDEAGASMVSFAIDRALTQMGIDPASDKPLAGKTALVLGAGAMSSLAATHLGREGVDKLIMANRTRERAERLASHSLEAGVPAEVVDFADRASVLDRVDMVVSATGADDFTVKPADIPAGVQLMLVDLSMPRDIDDACAEVPGVDLVNIERLHRAKREDPTGAAAEGADALAIVREELEAFTSEQRIRDVVPAVSALRKRANELLLDELDRLQARTPDISQEDWKEVTRTVRRVMDKFLHEPTVRVKKLAARSGSVSYESALQELFGLEAVQTTAPPAITSVNASDLPDAGIVAIVNSPSTTGQSVSVDGS</sequence>